<accession>Q8SQH7</accession>
<gene>
    <name type="ordered locus">ECU07_1830</name>
</gene>
<gene>
    <name type="ordered locus">ECU11_2070</name>
</gene>
<organism>
    <name type="scientific">Encephalitozoon cuniculi (strain GB-M1)</name>
    <name type="common">Microsporidian parasite</name>
    <dbReference type="NCBI Taxonomy" id="284813"/>
    <lineage>
        <taxon>Eukaryota</taxon>
        <taxon>Fungi</taxon>
        <taxon>Fungi incertae sedis</taxon>
        <taxon>Microsporidia</taxon>
        <taxon>Unikaryonidae</taxon>
        <taxon>Encephalitozoon</taxon>
    </lineage>
</organism>
<comment type="function">
    <text evidence="1">Binds specifically to the 3'-terminal U-tract of U6 snRNA.</text>
</comment>
<comment type="subcellular location">
    <subcellularLocation>
        <location evidence="1">Nucleus</location>
    </subcellularLocation>
</comment>
<comment type="similarity">
    <text evidence="3">Belongs to the snRNP Sm proteins family.</text>
</comment>
<reference key="1">
    <citation type="journal article" date="2001" name="Nature">
        <title>Genome sequence and gene compaction of the eukaryote parasite Encephalitozoon cuniculi.</title>
        <authorList>
            <person name="Katinka M.D."/>
            <person name="Duprat S."/>
            <person name="Cornillot E."/>
            <person name="Metenier G."/>
            <person name="Thomarat F."/>
            <person name="Prensier G."/>
            <person name="Barbe V."/>
            <person name="Peyretaillade E."/>
            <person name="Brottier P."/>
            <person name="Wincker P."/>
            <person name="Delbac F."/>
            <person name="El Alaoui H."/>
            <person name="Peyret P."/>
            <person name="Saurin W."/>
            <person name="Gouy M."/>
            <person name="Weissenbach J."/>
            <person name="Vivares C.P."/>
        </authorList>
    </citation>
    <scope>NUCLEOTIDE SEQUENCE [LARGE SCALE GENOMIC DNA]</scope>
    <source>
        <strain>GB-M1</strain>
    </source>
</reference>
<protein>
    <recommendedName>
        <fullName>Probable U6 snRNA-associated Sm-like protein</fullName>
    </recommendedName>
</protein>
<evidence type="ECO:0000250" key="1"/>
<evidence type="ECO:0000255" key="2">
    <source>
        <dbReference type="PROSITE-ProRule" id="PRU01346"/>
    </source>
</evidence>
<evidence type="ECO:0000305" key="3"/>
<proteinExistence type="inferred from homology"/>
<feature type="chain" id="PRO_0000125589" description="Probable U6 snRNA-associated Sm-like protein">
    <location>
        <begin position="1"/>
        <end position="70"/>
    </location>
</feature>
<feature type="domain" description="Sm" evidence="2">
    <location>
        <begin position="3"/>
        <end position="70"/>
    </location>
</feature>
<keyword id="KW-0507">mRNA processing</keyword>
<keyword id="KW-0508">mRNA splicing</keyword>
<keyword id="KW-0539">Nucleus</keyword>
<keyword id="KW-1185">Reference proteome</keyword>
<keyword id="KW-0687">Ribonucleoprotein</keyword>
<keyword id="KW-0694">RNA-binding</keyword>
<dbReference type="EMBL" id="AL590447">
    <property type="protein sequence ID" value="CAD25714.1"/>
    <property type="molecule type" value="Genomic_DNA"/>
</dbReference>
<dbReference type="EMBL" id="AL590450">
    <property type="protein sequence ID" value="CAD26118.1"/>
    <property type="molecule type" value="Genomic_DNA"/>
</dbReference>
<dbReference type="RefSeq" id="NP_586110.1">
    <property type="nucleotide sequence ID" value="NM_001041732.1"/>
</dbReference>
<dbReference type="RefSeq" id="NP_586514.1">
    <property type="nucleotide sequence ID" value="NM_001042347.1"/>
</dbReference>
<dbReference type="SMR" id="Q8SQH7"/>
<dbReference type="STRING" id="284813.Q8SQH7"/>
<dbReference type="GeneID" id="859544"/>
<dbReference type="GeneID" id="860167"/>
<dbReference type="KEGG" id="ecu:ECU07_1830"/>
<dbReference type="KEGG" id="ecu:ECU11_2070"/>
<dbReference type="VEuPathDB" id="MicrosporidiaDB:ECU07_1830"/>
<dbReference type="VEuPathDB" id="MicrosporidiaDB:ECU10_0065"/>
<dbReference type="VEuPathDB" id="MicrosporidiaDB:ECU11_2070"/>
<dbReference type="HOGENOM" id="CLU_076902_11_2_1"/>
<dbReference type="InParanoid" id="Q8SQH7"/>
<dbReference type="OMA" id="IMIRLRD"/>
<dbReference type="OrthoDB" id="29543at2759"/>
<dbReference type="Proteomes" id="UP000000819">
    <property type="component" value="Chromosome VII"/>
</dbReference>
<dbReference type="Proteomes" id="UP000000819">
    <property type="component" value="Chromosome XI"/>
</dbReference>
<dbReference type="GO" id="GO:0005634">
    <property type="term" value="C:nucleus"/>
    <property type="evidence" value="ECO:0007669"/>
    <property type="project" value="UniProtKB-SubCell"/>
</dbReference>
<dbReference type="GO" id="GO:1990904">
    <property type="term" value="C:ribonucleoprotein complex"/>
    <property type="evidence" value="ECO:0007669"/>
    <property type="project" value="UniProtKB-KW"/>
</dbReference>
<dbReference type="GO" id="GO:0003723">
    <property type="term" value="F:RNA binding"/>
    <property type="evidence" value="ECO:0007669"/>
    <property type="project" value="UniProtKB-KW"/>
</dbReference>
<dbReference type="GO" id="GO:0006397">
    <property type="term" value="P:mRNA processing"/>
    <property type="evidence" value="ECO:0007669"/>
    <property type="project" value="UniProtKB-KW"/>
</dbReference>
<dbReference type="GO" id="GO:0008380">
    <property type="term" value="P:RNA splicing"/>
    <property type="evidence" value="ECO:0007669"/>
    <property type="project" value="UniProtKB-KW"/>
</dbReference>
<dbReference type="Gene3D" id="2.30.30.100">
    <property type="match status" value="1"/>
</dbReference>
<dbReference type="InterPro" id="IPR010920">
    <property type="entry name" value="LSM_dom_sf"/>
</dbReference>
<dbReference type="InterPro" id="IPR047575">
    <property type="entry name" value="Sm"/>
</dbReference>
<dbReference type="InterPro" id="IPR001163">
    <property type="entry name" value="Sm_dom_euk/arc"/>
</dbReference>
<dbReference type="Pfam" id="PF01423">
    <property type="entry name" value="LSM"/>
    <property type="match status" value="1"/>
</dbReference>
<dbReference type="SMART" id="SM00651">
    <property type="entry name" value="Sm"/>
    <property type="match status" value="1"/>
</dbReference>
<dbReference type="SUPFAM" id="SSF50182">
    <property type="entry name" value="Sm-like ribonucleoproteins"/>
    <property type="match status" value="1"/>
</dbReference>
<dbReference type="PROSITE" id="PS52002">
    <property type="entry name" value="SM"/>
    <property type="match status" value="1"/>
</dbReference>
<name>LSMH_ENCCU</name>
<sequence length="70" mass="7973">MLDPFCFLKMYLKERVEVKTKSGEAYTGTLEGFDEHINLMLTCSSVEGSEDKVLFLRGENILFVGPRLLL</sequence>